<protein>
    <recommendedName>
        <fullName evidence="1">ATP synthase epsilon chain</fullName>
    </recommendedName>
    <alternativeName>
        <fullName evidence="1">ATP synthase F1 sector epsilon subunit</fullName>
    </alternativeName>
    <alternativeName>
        <fullName evidence="1">F-ATPase epsilon subunit</fullName>
    </alternativeName>
</protein>
<organism>
    <name type="scientific">Polaromonas naphthalenivorans (strain CJ2)</name>
    <dbReference type="NCBI Taxonomy" id="365044"/>
    <lineage>
        <taxon>Bacteria</taxon>
        <taxon>Pseudomonadati</taxon>
        <taxon>Pseudomonadota</taxon>
        <taxon>Betaproteobacteria</taxon>
        <taxon>Burkholderiales</taxon>
        <taxon>Comamonadaceae</taxon>
        <taxon>Polaromonas</taxon>
    </lineage>
</organism>
<name>ATPE_POLNA</name>
<proteinExistence type="inferred from homology"/>
<reference key="1">
    <citation type="journal article" date="2009" name="Environ. Microbiol.">
        <title>The genome of Polaromonas naphthalenivorans strain CJ2, isolated from coal tar-contaminated sediment, reveals physiological and metabolic versatility and evolution through extensive horizontal gene transfer.</title>
        <authorList>
            <person name="Yagi J.M."/>
            <person name="Sims D."/>
            <person name="Brettin T."/>
            <person name="Bruce D."/>
            <person name="Madsen E.L."/>
        </authorList>
    </citation>
    <scope>NUCLEOTIDE SEQUENCE [LARGE SCALE GENOMIC DNA]</scope>
    <source>
        <strain>CJ2</strain>
    </source>
</reference>
<gene>
    <name evidence="1" type="primary">atpC</name>
    <name type="ordered locus">Pnap_0256</name>
</gene>
<comment type="function">
    <text evidence="1">Produces ATP from ADP in the presence of a proton gradient across the membrane.</text>
</comment>
<comment type="subunit">
    <text evidence="1">F-type ATPases have 2 components, CF(1) - the catalytic core - and CF(0) - the membrane proton channel. CF(1) has five subunits: alpha(3), beta(3), gamma(1), delta(1), epsilon(1). CF(0) has three main subunits: a, b and c.</text>
</comment>
<comment type="subcellular location">
    <subcellularLocation>
        <location evidence="1">Cell inner membrane</location>
        <topology evidence="1">Peripheral membrane protein</topology>
    </subcellularLocation>
</comment>
<comment type="similarity">
    <text evidence="1">Belongs to the ATPase epsilon chain family.</text>
</comment>
<evidence type="ECO:0000255" key="1">
    <source>
        <dbReference type="HAMAP-Rule" id="MF_00530"/>
    </source>
</evidence>
<keyword id="KW-0066">ATP synthesis</keyword>
<keyword id="KW-0997">Cell inner membrane</keyword>
<keyword id="KW-1003">Cell membrane</keyword>
<keyword id="KW-0139">CF(1)</keyword>
<keyword id="KW-0375">Hydrogen ion transport</keyword>
<keyword id="KW-0406">Ion transport</keyword>
<keyword id="KW-0472">Membrane</keyword>
<keyword id="KW-1185">Reference proteome</keyword>
<keyword id="KW-0813">Transport</keyword>
<sequence>MNTIHVDVVSAEESIFSGEARFVALPGEAGELGIYPRHTPLITRIRPGAVRIEKADGTEEFVFVAGGLLEVQPNCVTVLSDTAIRGKDLDEAKATAAKALAEEALKNAKNDIDIAMAQSELAVMAAQIAALRKYRQKK</sequence>
<accession>A1VIV3</accession>
<feature type="chain" id="PRO_1000056515" description="ATP synthase epsilon chain">
    <location>
        <begin position="1"/>
        <end position="138"/>
    </location>
</feature>
<dbReference type="EMBL" id="CP000529">
    <property type="protein sequence ID" value="ABM35581.1"/>
    <property type="molecule type" value="Genomic_DNA"/>
</dbReference>
<dbReference type="RefSeq" id="WP_011799689.1">
    <property type="nucleotide sequence ID" value="NC_008781.1"/>
</dbReference>
<dbReference type="SMR" id="A1VIV3"/>
<dbReference type="STRING" id="365044.Pnap_0256"/>
<dbReference type="KEGG" id="pna:Pnap_0256"/>
<dbReference type="eggNOG" id="COG0355">
    <property type="taxonomic scope" value="Bacteria"/>
</dbReference>
<dbReference type="HOGENOM" id="CLU_084338_2_0_4"/>
<dbReference type="OrthoDB" id="9791445at2"/>
<dbReference type="Proteomes" id="UP000000644">
    <property type="component" value="Chromosome"/>
</dbReference>
<dbReference type="GO" id="GO:0005886">
    <property type="term" value="C:plasma membrane"/>
    <property type="evidence" value="ECO:0007669"/>
    <property type="project" value="UniProtKB-SubCell"/>
</dbReference>
<dbReference type="GO" id="GO:0045259">
    <property type="term" value="C:proton-transporting ATP synthase complex"/>
    <property type="evidence" value="ECO:0007669"/>
    <property type="project" value="UniProtKB-KW"/>
</dbReference>
<dbReference type="GO" id="GO:0005524">
    <property type="term" value="F:ATP binding"/>
    <property type="evidence" value="ECO:0007669"/>
    <property type="project" value="UniProtKB-UniRule"/>
</dbReference>
<dbReference type="GO" id="GO:0046933">
    <property type="term" value="F:proton-transporting ATP synthase activity, rotational mechanism"/>
    <property type="evidence" value="ECO:0007669"/>
    <property type="project" value="UniProtKB-UniRule"/>
</dbReference>
<dbReference type="CDD" id="cd12152">
    <property type="entry name" value="F1-ATPase_delta"/>
    <property type="match status" value="1"/>
</dbReference>
<dbReference type="FunFam" id="2.60.15.10:FF:000001">
    <property type="entry name" value="ATP synthase epsilon chain"/>
    <property type="match status" value="1"/>
</dbReference>
<dbReference type="Gene3D" id="1.20.5.440">
    <property type="entry name" value="ATP synthase delta/epsilon subunit, C-terminal domain"/>
    <property type="match status" value="1"/>
</dbReference>
<dbReference type="Gene3D" id="2.60.15.10">
    <property type="entry name" value="F0F1 ATP synthase delta/epsilon subunit, N-terminal"/>
    <property type="match status" value="1"/>
</dbReference>
<dbReference type="HAMAP" id="MF_00530">
    <property type="entry name" value="ATP_synth_epsil_bac"/>
    <property type="match status" value="1"/>
</dbReference>
<dbReference type="InterPro" id="IPR036794">
    <property type="entry name" value="ATP_F1_dsu/esu_C_sf"/>
</dbReference>
<dbReference type="InterPro" id="IPR001469">
    <property type="entry name" value="ATP_synth_F1_dsu/esu"/>
</dbReference>
<dbReference type="InterPro" id="IPR020546">
    <property type="entry name" value="ATP_synth_F1_dsu/esu_N"/>
</dbReference>
<dbReference type="InterPro" id="IPR020547">
    <property type="entry name" value="ATP_synth_F1_esu_C"/>
</dbReference>
<dbReference type="InterPro" id="IPR036771">
    <property type="entry name" value="ATPsynth_dsu/esu_N"/>
</dbReference>
<dbReference type="NCBIfam" id="TIGR01216">
    <property type="entry name" value="ATP_synt_epsi"/>
    <property type="match status" value="1"/>
</dbReference>
<dbReference type="NCBIfam" id="NF001847">
    <property type="entry name" value="PRK00571.1-4"/>
    <property type="match status" value="1"/>
</dbReference>
<dbReference type="PANTHER" id="PTHR13822">
    <property type="entry name" value="ATP SYNTHASE DELTA/EPSILON CHAIN"/>
    <property type="match status" value="1"/>
</dbReference>
<dbReference type="PANTHER" id="PTHR13822:SF10">
    <property type="entry name" value="ATP SYNTHASE EPSILON CHAIN, CHLOROPLASTIC"/>
    <property type="match status" value="1"/>
</dbReference>
<dbReference type="Pfam" id="PF00401">
    <property type="entry name" value="ATP-synt_DE"/>
    <property type="match status" value="1"/>
</dbReference>
<dbReference type="Pfam" id="PF02823">
    <property type="entry name" value="ATP-synt_DE_N"/>
    <property type="match status" value="1"/>
</dbReference>
<dbReference type="SUPFAM" id="SSF46604">
    <property type="entry name" value="Epsilon subunit of F1F0-ATP synthase C-terminal domain"/>
    <property type="match status" value="1"/>
</dbReference>
<dbReference type="SUPFAM" id="SSF51344">
    <property type="entry name" value="Epsilon subunit of F1F0-ATP synthase N-terminal domain"/>
    <property type="match status" value="1"/>
</dbReference>